<organism>
    <name type="scientific">Pan paniscus</name>
    <name type="common">Pygmy chimpanzee</name>
    <name type="synonym">Bonobo</name>
    <dbReference type="NCBI Taxonomy" id="9597"/>
    <lineage>
        <taxon>Eukaryota</taxon>
        <taxon>Metazoa</taxon>
        <taxon>Chordata</taxon>
        <taxon>Craniata</taxon>
        <taxon>Vertebrata</taxon>
        <taxon>Euteleostomi</taxon>
        <taxon>Mammalia</taxon>
        <taxon>Eutheria</taxon>
        <taxon>Euarchontoglires</taxon>
        <taxon>Primates</taxon>
        <taxon>Haplorrhini</taxon>
        <taxon>Catarrhini</taxon>
        <taxon>Hominidae</taxon>
        <taxon>Pan</taxon>
    </lineage>
</organism>
<sequence>MAEESRKPSAPSPPDQTPEEDLVIVKVEEDHGWDQESSLHENNPLGQEVFRLRFRQLCYQETLGPREALIQLRALCHQWLRPDLNTKEQILELLVLEQFLTILPEELQTLVKEHQLENGEEVVTLLEDLERQIDILGRPVSARVHGHRVLWEEVVHSASAPEPPNTQLQSEATQHKSPVPQESQERSMSTSQSPTRSQKGSSGDQEMTATLLTAGFQTLEKIEDMAVSLIREEWLLDPSQKDLSRDNRPEDFRNVFSLGGETRSENRELASKQVISTGIHPHGETAAKCNGDVIRGLEHEEARDLLGRLERQRGNPTQERRHKCDECGKSFAQSSGLVRHWRIHTGEKPYQCNVCGKAFSYRSALLSHQDIHNKVKRYHCKECGKAFSQNTGLILHQRIHTGEKPYQCNQCGKAFSQSAGLILHQRIHSGERPYECNECGKAFSHSSHLIGHQRIHTGEKPYECDECGKTFRRSSHLIGHQRSHTGEKPYKCNECGRAFSQKSGLIEHQRIHTGERPYKCKECGKAFNGNTGLIQHLRIHTGEKPYQCNECGKAFIQRSSLIRHQRIHSGEKSESISV</sequence>
<keyword id="KW-0238">DNA-binding</keyword>
<keyword id="KW-1017">Isopeptide bond</keyword>
<keyword id="KW-0479">Metal-binding</keyword>
<keyword id="KW-0539">Nucleus</keyword>
<keyword id="KW-0597">Phosphoprotein</keyword>
<keyword id="KW-1185">Reference proteome</keyword>
<keyword id="KW-0677">Repeat</keyword>
<keyword id="KW-0804">Transcription</keyword>
<keyword id="KW-0805">Transcription regulation</keyword>
<keyword id="KW-0832">Ubl conjugation</keyword>
<keyword id="KW-0862">Zinc</keyword>
<keyword id="KW-0863">Zinc-finger</keyword>
<reference key="1">
    <citation type="submission" date="2006-08" db="EMBL/GenBank/DDBJ databases">
        <title>Positive selection in transcription factor genes on the human lineage.</title>
        <authorList>
            <person name="Nickel G.C."/>
            <person name="Tefft D.L."/>
            <person name="Trevarthen K."/>
            <person name="Funt J."/>
            <person name="Adams M.D."/>
        </authorList>
    </citation>
    <scope>NUCLEOTIDE SEQUENCE [GENOMIC DNA]</scope>
</reference>
<proteinExistence type="inferred from homology"/>
<accession>A1YG60</accession>
<gene>
    <name type="primary">ZKSCAN8</name>
    <name type="synonym">ZNF192</name>
</gene>
<evidence type="ECO:0000250" key="1">
    <source>
        <dbReference type="UniProtKB" id="P17029"/>
    </source>
</evidence>
<evidence type="ECO:0000250" key="2">
    <source>
        <dbReference type="UniProtKB" id="Q15776"/>
    </source>
</evidence>
<evidence type="ECO:0000255" key="3">
    <source>
        <dbReference type="PROSITE-ProRule" id="PRU00042"/>
    </source>
</evidence>
<evidence type="ECO:0000255" key="4">
    <source>
        <dbReference type="PROSITE-ProRule" id="PRU00119"/>
    </source>
</evidence>
<evidence type="ECO:0000255" key="5">
    <source>
        <dbReference type="PROSITE-ProRule" id="PRU00187"/>
    </source>
</evidence>
<evidence type="ECO:0000256" key="6">
    <source>
        <dbReference type="SAM" id="MobiDB-lite"/>
    </source>
</evidence>
<evidence type="ECO:0000305" key="7"/>
<dbReference type="EMBL" id="DQ977223">
    <property type="protein sequence ID" value="ABM54285.1"/>
    <property type="molecule type" value="Genomic_DNA"/>
</dbReference>
<dbReference type="RefSeq" id="XP_003829713.1">
    <property type="nucleotide sequence ID" value="XM_003829665.2"/>
</dbReference>
<dbReference type="RefSeq" id="XP_003829714.1">
    <property type="nucleotide sequence ID" value="XM_003829666.2"/>
</dbReference>
<dbReference type="RefSeq" id="XP_008953288.1">
    <property type="nucleotide sequence ID" value="XM_008955040.2"/>
</dbReference>
<dbReference type="RefSeq" id="XP_008953289.1">
    <property type="nucleotide sequence ID" value="XM_008955041.2"/>
</dbReference>
<dbReference type="SMR" id="A1YG60"/>
<dbReference type="STRING" id="9597.ENSPPAP00000023728"/>
<dbReference type="Ensembl" id="ENSPPAT00000046553.1">
    <property type="protein sequence ID" value="ENSPPAP00000023728.1"/>
    <property type="gene ID" value="ENSPPAG00000035024.1"/>
</dbReference>
<dbReference type="GeneID" id="100980386"/>
<dbReference type="KEGG" id="pps:100980386"/>
<dbReference type="eggNOG" id="KOG1721">
    <property type="taxonomic scope" value="Eukaryota"/>
</dbReference>
<dbReference type="GeneTree" id="ENSGT00940000161576"/>
<dbReference type="OMA" id="HGWEQES"/>
<dbReference type="Proteomes" id="UP000240080">
    <property type="component" value="Chromosome 6"/>
</dbReference>
<dbReference type="Bgee" id="ENSPPAG00000035024">
    <property type="expression patterns" value="Expressed in cerebellum and 6 other cell types or tissues"/>
</dbReference>
<dbReference type="GO" id="GO:0005634">
    <property type="term" value="C:nucleus"/>
    <property type="evidence" value="ECO:0007669"/>
    <property type="project" value="UniProtKB-SubCell"/>
</dbReference>
<dbReference type="GO" id="GO:0000981">
    <property type="term" value="F:DNA-binding transcription factor activity, RNA polymerase II-specific"/>
    <property type="evidence" value="ECO:0007669"/>
    <property type="project" value="TreeGrafter"/>
</dbReference>
<dbReference type="GO" id="GO:0000978">
    <property type="term" value="F:RNA polymerase II cis-regulatory region sequence-specific DNA binding"/>
    <property type="evidence" value="ECO:0007669"/>
    <property type="project" value="TreeGrafter"/>
</dbReference>
<dbReference type="GO" id="GO:0008270">
    <property type="term" value="F:zinc ion binding"/>
    <property type="evidence" value="ECO:0007669"/>
    <property type="project" value="UniProtKB-KW"/>
</dbReference>
<dbReference type="CDD" id="cd07765">
    <property type="entry name" value="KRAB_A-box"/>
    <property type="match status" value="1"/>
</dbReference>
<dbReference type="CDD" id="cd07936">
    <property type="entry name" value="SCAN"/>
    <property type="match status" value="1"/>
</dbReference>
<dbReference type="FunFam" id="3.30.160.60:FF:004137">
    <property type="match status" value="1"/>
</dbReference>
<dbReference type="FunFam" id="3.30.160.60:FF:000198">
    <property type="entry name" value="zinc finger protein 10 isoform X1"/>
    <property type="match status" value="1"/>
</dbReference>
<dbReference type="FunFam" id="3.30.160.60:FF:000794">
    <property type="entry name" value="zinc finger protein 2 isoform X2"/>
    <property type="match status" value="1"/>
</dbReference>
<dbReference type="FunFam" id="1.10.4020.10:FF:000001">
    <property type="entry name" value="zinc finger protein 263 isoform X1"/>
    <property type="match status" value="1"/>
</dbReference>
<dbReference type="FunFam" id="3.30.160.60:FF:002402">
    <property type="entry name" value="Zinc finger protein 347"/>
    <property type="match status" value="1"/>
</dbReference>
<dbReference type="FunFam" id="3.30.160.60:FF:002254">
    <property type="entry name" value="Zinc finger protein 540"/>
    <property type="match status" value="1"/>
</dbReference>
<dbReference type="FunFam" id="3.30.160.60:FF:000737">
    <property type="entry name" value="Zinc finger protein 565"/>
    <property type="match status" value="1"/>
</dbReference>
<dbReference type="FunFam" id="3.30.160.60:FF:000427">
    <property type="entry name" value="Zinc finger with KRAB and SCAN domains 7"/>
    <property type="match status" value="1"/>
</dbReference>
<dbReference type="FunFam" id="3.30.160.60:FF:000529">
    <property type="entry name" value="Zinc finger with KRAB and SCAN domains 8"/>
    <property type="match status" value="2"/>
</dbReference>
<dbReference type="FunFam" id="3.30.160.60:FF:001403">
    <property type="entry name" value="Zinc finger with KRAB and SCAN domains 8"/>
    <property type="match status" value="1"/>
</dbReference>
<dbReference type="Gene3D" id="6.10.140.140">
    <property type="match status" value="1"/>
</dbReference>
<dbReference type="Gene3D" id="3.30.160.60">
    <property type="entry name" value="Classic Zinc Finger"/>
    <property type="match status" value="9"/>
</dbReference>
<dbReference type="Gene3D" id="1.10.4020.10">
    <property type="entry name" value="DNA breaking-rejoining enzymes"/>
    <property type="match status" value="1"/>
</dbReference>
<dbReference type="InterPro" id="IPR001909">
    <property type="entry name" value="KRAB"/>
</dbReference>
<dbReference type="InterPro" id="IPR036051">
    <property type="entry name" value="KRAB_dom_sf"/>
</dbReference>
<dbReference type="InterPro" id="IPR003309">
    <property type="entry name" value="SCAN_dom"/>
</dbReference>
<dbReference type="InterPro" id="IPR038269">
    <property type="entry name" value="SCAN_sf"/>
</dbReference>
<dbReference type="InterPro" id="IPR050527">
    <property type="entry name" value="Snail/Krueppel_Znf"/>
</dbReference>
<dbReference type="InterPro" id="IPR036236">
    <property type="entry name" value="Znf_C2H2_sf"/>
</dbReference>
<dbReference type="InterPro" id="IPR013087">
    <property type="entry name" value="Znf_C2H2_type"/>
</dbReference>
<dbReference type="PANTHER" id="PTHR24388:SF96">
    <property type="entry name" value="GENE, 32687-RELATED"/>
    <property type="match status" value="1"/>
</dbReference>
<dbReference type="PANTHER" id="PTHR24388">
    <property type="entry name" value="ZINC FINGER PROTEIN"/>
    <property type="match status" value="1"/>
</dbReference>
<dbReference type="Pfam" id="PF01352">
    <property type="entry name" value="KRAB"/>
    <property type="match status" value="1"/>
</dbReference>
<dbReference type="Pfam" id="PF02023">
    <property type="entry name" value="SCAN"/>
    <property type="match status" value="1"/>
</dbReference>
<dbReference type="Pfam" id="PF00096">
    <property type="entry name" value="zf-C2H2"/>
    <property type="match status" value="9"/>
</dbReference>
<dbReference type="SMART" id="SM00349">
    <property type="entry name" value="KRAB"/>
    <property type="match status" value="1"/>
</dbReference>
<dbReference type="SMART" id="SM00431">
    <property type="entry name" value="SCAN"/>
    <property type="match status" value="1"/>
</dbReference>
<dbReference type="SMART" id="SM00355">
    <property type="entry name" value="ZnF_C2H2"/>
    <property type="match status" value="9"/>
</dbReference>
<dbReference type="SUPFAM" id="SSF57667">
    <property type="entry name" value="beta-beta-alpha zinc fingers"/>
    <property type="match status" value="5"/>
</dbReference>
<dbReference type="SUPFAM" id="SSF109640">
    <property type="entry name" value="KRAB domain (Kruppel-associated box)"/>
    <property type="match status" value="1"/>
</dbReference>
<dbReference type="SUPFAM" id="SSF47353">
    <property type="entry name" value="Retrovirus capsid dimerization domain-like"/>
    <property type="match status" value="1"/>
</dbReference>
<dbReference type="PROSITE" id="PS50805">
    <property type="entry name" value="KRAB"/>
    <property type="match status" value="1"/>
</dbReference>
<dbReference type="PROSITE" id="PS50804">
    <property type="entry name" value="SCAN_BOX"/>
    <property type="match status" value="1"/>
</dbReference>
<dbReference type="PROSITE" id="PS00028">
    <property type="entry name" value="ZINC_FINGER_C2H2_1"/>
    <property type="match status" value="9"/>
</dbReference>
<dbReference type="PROSITE" id="PS50157">
    <property type="entry name" value="ZINC_FINGER_C2H2_2"/>
    <property type="match status" value="9"/>
</dbReference>
<protein>
    <recommendedName>
        <fullName>Zinc finger protein with KRAB and SCAN domains 8</fullName>
    </recommendedName>
    <alternativeName>
        <fullName>Zinc finger protein 192</fullName>
    </alternativeName>
</protein>
<feature type="chain" id="PRO_0000285470" description="Zinc finger protein with KRAB and SCAN domains 8">
    <location>
        <begin position="1"/>
        <end position="578"/>
    </location>
</feature>
<feature type="domain" description="SCAN box" evidence="5">
    <location>
        <begin position="51"/>
        <end position="133"/>
    </location>
</feature>
<feature type="domain" description="KRAB" evidence="4">
    <location>
        <begin position="220"/>
        <end position="316"/>
    </location>
</feature>
<feature type="zinc finger region" description="C2H2-type 1" evidence="3">
    <location>
        <begin position="322"/>
        <end position="344"/>
    </location>
</feature>
<feature type="zinc finger region" description="C2H2-type 2" evidence="3">
    <location>
        <begin position="350"/>
        <end position="372"/>
    </location>
</feature>
<feature type="zinc finger region" description="C2H2-type 3" evidence="3">
    <location>
        <begin position="378"/>
        <end position="400"/>
    </location>
</feature>
<feature type="zinc finger region" description="C2H2-type 4" evidence="3">
    <location>
        <begin position="406"/>
        <end position="428"/>
    </location>
</feature>
<feature type="zinc finger region" description="C2H2-type 5" evidence="3">
    <location>
        <begin position="434"/>
        <end position="456"/>
    </location>
</feature>
<feature type="zinc finger region" description="C2H2-type 6" evidence="3">
    <location>
        <begin position="462"/>
        <end position="484"/>
    </location>
</feature>
<feature type="zinc finger region" description="C2H2-type 7" evidence="3">
    <location>
        <begin position="490"/>
        <end position="512"/>
    </location>
</feature>
<feature type="zinc finger region" description="C2H2-type 8" evidence="3">
    <location>
        <begin position="518"/>
        <end position="540"/>
    </location>
</feature>
<feature type="zinc finger region" description="C2H2-type 9" evidence="3">
    <location>
        <begin position="546"/>
        <end position="568"/>
    </location>
</feature>
<feature type="region of interest" description="Disordered" evidence="6">
    <location>
        <begin position="1"/>
        <end position="20"/>
    </location>
</feature>
<feature type="region of interest" description="Disordered" evidence="6">
    <location>
        <begin position="158"/>
        <end position="205"/>
    </location>
</feature>
<feature type="compositionally biased region" description="Polar residues" evidence="6">
    <location>
        <begin position="165"/>
        <end position="205"/>
    </location>
</feature>
<feature type="modified residue" description="Phosphoserine" evidence="2">
    <location>
        <position position="12"/>
    </location>
</feature>
<feature type="modified residue" description="Phosphoserine" evidence="1">
    <location>
        <position position="201"/>
    </location>
</feature>
<feature type="cross-link" description="Glycyl lysine isopeptide (Lys-Gly) (interchain with G-Cter in SUMO2)" evidence="2">
    <location>
        <position position="26"/>
    </location>
</feature>
<feature type="cross-link" description="Glycyl lysine isopeptide (Lys-Gly) (interchain with G-Cter in SUMO2)" evidence="2">
    <location>
        <position position="176"/>
    </location>
</feature>
<feature type="cross-link" description="Glycyl lysine isopeptide (Lys-Gly) (interchain with G-Cter in SUMO2)" evidence="2">
    <location>
        <position position="199"/>
    </location>
</feature>
<feature type="cross-link" description="Glycyl lysine isopeptide (Lys-Gly) (interchain with G-Cter in SUMO2)" evidence="1">
    <location>
        <position position="221"/>
    </location>
</feature>
<feature type="cross-link" description="Glycyl lysine isopeptide (Lys-Gly) (interchain with G-Cter in SUMO2)" evidence="2">
    <location>
        <position position="272"/>
    </location>
</feature>
<feature type="cross-link" description="Glycyl lysine isopeptide (Lys-Gly) (interchain with G-Cter in SUMO2)" evidence="2">
    <location>
        <position position="288"/>
    </location>
</feature>
<feature type="cross-link" description="Glycyl lysine isopeptide (Lys-Gly) (interchain with G-Cter in SUMO2)" evidence="2">
    <location>
        <position position="374"/>
    </location>
</feature>
<feature type="cross-link" description="Glycyl lysine isopeptide (Lys-Gly) (interchain with G-Cter in SUMO2)" evidence="1">
    <location>
        <position position="376"/>
    </location>
</feature>
<feature type="cross-link" description="Glycyl lysine isopeptide (Lys-Gly) (interchain with G-Cter in SUMO2)" evidence="1">
    <location>
        <position position="413"/>
    </location>
</feature>
<feature type="cross-link" description="Glycyl lysine isopeptide (Lys-Gly) (interchain with G-Cter in SUMO2)" evidence="2">
    <location>
        <position position="441"/>
    </location>
</feature>
<feature type="cross-link" description="Glycyl lysine isopeptide (Lys-Gly) (interchain with G-Cter in SUMO2)" evidence="2">
    <location>
        <position position="502"/>
    </location>
</feature>
<feature type="cross-link" description="Glycyl lysine isopeptide (Lys-Gly) (interchain with G-Cter in SUMO2)" evidence="2">
    <location>
        <position position="572"/>
    </location>
</feature>
<name>ZKSC8_PANPA</name>
<comment type="function">
    <text>May be involved in transcriptional regulation.</text>
</comment>
<comment type="subcellular location">
    <subcellularLocation>
        <location evidence="5">Nucleus</location>
    </subcellularLocation>
</comment>
<comment type="similarity">
    <text evidence="7">Belongs to the krueppel C2H2-type zinc-finger protein family.</text>
</comment>